<gene>
    <name evidence="1" type="primary">rsmG</name>
    <name type="ordered locus">Shew_3855</name>
</gene>
<comment type="function">
    <text evidence="1">Specifically methylates the N7 position of guanine in position 527 of 16S rRNA.</text>
</comment>
<comment type="catalytic activity">
    <reaction evidence="1">
        <text>guanosine(527) in 16S rRNA + S-adenosyl-L-methionine = N(7)-methylguanosine(527) in 16S rRNA + S-adenosyl-L-homocysteine</text>
        <dbReference type="Rhea" id="RHEA:42732"/>
        <dbReference type="Rhea" id="RHEA-COMP:10209"/>
        <dbReference type="Rhea" id="RHEA-COMP:10210"/>
        <dbReference type="ChEBI" id="CHEBI:57856"/>
        <dbReference type="ChEBI" id="CHEBI:59789"/>
        <dbReference type="ChEBI" id="CHEBI:74269"/>
        <dbReference type="ChEBI" id="CHEBI:74480"/>
        <dbReference type="EC" id="2.1.1.170"/>
    </reaction>
</comment>
<comment type="subcellular location">
    <subcellularLocation>
        <location evidence="1">Cytoplasm</location>
    </subcellularLocation>
</comment>
<comment type="similarity">
    <text evidence="1">Belongs to the methyltransferase superfamily. RNA methyltransferase RsmG family.</text>
</comment>
<comment type="sequence caution" evidence="2">
    <conflict type="erroneous initiation">
        <sequence resource="EMBL-CDS" id="ABO25718"/>
    </conflict>
</comment>
<dbReference type="EC" id="2.1.1.170" evidence="1"/>
<dbReference type="EMBL" id="CP000606">
    <property type="protein sequence ID" value="ABO25718.1"/>
    <property type="status" value="ALT_INIT"/>
    <property type="molecule type" value="Genomic_DNA"/>
</dbReference>
<dbReference type="RefSeq" id="WP_041406831.1">
    <property type="nucleotide sequence ID" value="NC_009092.1"/>
</dbReference>
<dbReference type="SMR" id="A3QJS0"/>
<dbReference type="STRING" id="323850.Shew_3855"/>
<dbReference type="KEGG" id="slo:Shew_3855"/>
<dbReference type="eggNOG" id="COG0357">
    <property type="taxonomic scope" value="Bacteria"/>
</dbReference>
<dbReference type="HOGENOM" id="CLU_065341_2_0_6"/>
<dbReference type="OrthoDB" id="9808773at2"/>
<dbReference type="Proteomes" id="UP000001558">
    <property type="component" value="Chromosome"/>
</dbReference>
<dbReference type="GO" id="GO:0005829">
    <property type="term" value="C:cytosol"/>
    <property type="evidence" value="ECO:0007669"/>
    <property type="project" value="TreeGrafter"/>
</dbReference>
<dbReference type="GO" id="GO:0070043">
    <property type="term" value="F:rRNA (guanine-N7-)-methyltransferase activity"/>
    <property type="evidence" value="ECO:0007669"/>
    <property type="project" value="UniProtKB-UniRule"/>
</dbReference>
<dbReference type="CDD" id="cd02440">
    <property type="entry name" value="AdoMet_MTases"/>
    <property type="match status" value="1"/>
</dbReference>
<dbReference type="FunFam" id="3.40.50.150:FF:000032">
    <property type="entry name" value="Ribosomal RNA small subunit methyltransferase G"/>
    <property type="match status" value="1"/>
</dbReference>
<dbReference type="Gene3D" id="3.40.50.150">
    <property type="entry name" value="Vaccinia Virus protein VP39"/>
    <property type="match status" value="1"/>
</dbReference>
<dbReference type="HAMAP" id="MF_00074">
    <property type="entry name" value="16SrRNA_methyltr_G"/>
    <property type="match status" value="1"/>
</dbReference>
<dbReference type="InterPro" id="IPR003682">
    <property type="entry name" value="rRNA_ssu_MeTfrase_G"/>
</dbReference>
<dbReference type="InterPro" id="IPR029063">
    <property type="entry name" value="SAM-dependent_MTases_sf"/>
</dbReference>
<dbReference type="NCBIfam" id="TIGR00138">
    <property type="entry name" value="rsmG_gidB"/>
    <property type="match status" value="1"/>
</dbReference>
<dbReference type="PANTHER" id="PTHR31760">
    <property type="entry name" value="S-ADENOSYL-L-METHIONINE-DEPENDENT METHYLTRANSFERASES SUPERFAMILY PROTEIN"/>
    <property type="match status" value="1"/>
</dbReference>
<dbReference type="PANTHER" id="PTHR31760:SF0">
    <property type="entry name" value="S-ADENOSYL-L-METHIONINE-DEPENDENT METHYLTRANSFERASES SUPERFAMILY PROTEIN"/>
    <property type="match status" value="1"/>
</dbReference>
<dbReference type="Pfam" id="PF02527">
    <property type="entry name" value="GidB"/>
    <property type="match status" value="1"/>
</dbReference>
<dbReference type="PIRSF" id="PIRSF003078">
    <property type="entry name" value="GidB"/>
    <property type="match status" value="1"/>
</dbReference>
<dbReference type="SUPFAM" id="SSF53335">
    <property type="entry name" value="S-adenosyl-L-methionine-dependent methyltransferases"/>
    <property type="match status" value="1"/>
</dbReference>
<name>RSMG_SHELP</name>
<feature type="chain" id="PRO_0000335427" description="Ribosomal RNA small subunit methyltransferase G">
    <location>
        <begin position="1"/>
        <end position="207"/>
    </location>
</feature>
<feature type="binding site" evidence="1">
    <location>
        <position position="74"/>
    </location>
    <ligand>
        <name>S-adenosyl-L-methionine</name>
        <dbReference type="ChEBI" id="CHEBI:59789"/>
    </ligand>
</feature>
<feature type="binding site" evidence="1">
    <location>
        <position position="79"/>
    </location>
    <ligand>
        <name>S-adenosyl-L-methionine</name>
        <dbReference type="ChEBI" id="CHEBI:59789"/>
    </ligand>
</feature>
<feature type="binding site" evidence="1">
    <location>
        <begin position="125"/>
        <end position="126"/>
    </location>
    <ligand>
        <name>S-adenosyl-L-methionine</name>
        <dbReference type="ChEBI" id="CHEBI:59789"/>
    </ligand>
</feature>
<feature type="binding site" evidence="1">
    <location>
        <position position="140"/>
    </location>
    <ligand>
        <name>S-adenosyl-L-methionine</name>
        <dbReference type="ChEBI" id="CHEBI:59789"/>
    </ligand>
</feature>
<evidence type="ECO:0000255" key="1">
    <source>
        <dbReference type="HAMAP-Rule" id="MF_00074"/>
    </source>
</evidence>
<evidence type="ECO:0000305" key="2"/>
<protein>
    <recommendedName>
        <fullName evidence="1">Ribosomal RNA small subunit methyltransferase G</fullName>
        <ecNumber evidence="1">2.1.1.170</ecNumber>
    </recommendedName>
    <alternativeName>
        <fullName evidence="1">16S rRNA 7-methylguanosine methyltransferase</fullName>
        <shortName evidence="1">16S rRNA m7G methyltransferase</shortName>
    </alternativeName>
</protein>
<keyword id="KW-0963">Cytoplasm</keyword>
<keyword id="KW-0489">Methyltransferase</keyword>
<keyword id="KW-1185">Reference proteome</keyword>
<keyword id="KW-0698">rRNA processing</keyword>
<keyword id="KW-0949">S-adenosyl-L-methionine</keyword>
<keyword id="KW-0808">Transferase</keyword>
<reference key="1">
    <citation type="submission" date="2007-03" db="EMBL/GenBank/DDBJ databases">
        <title>Complete sequence of Shewanella loihica PV-4.</title>
        <authorList>
            <consortium name="US DOE Joint Genome Institute"/>
            <person name="Copeland A."/>
            <person name="Lucas S."/>
            <person name="Lapidus A."/>
            <person name="Barry K."/>
            <person name="Detter J.C."/>
            <person name="Glavina del Rio T."/>
            <person name="Hammon N."/>
            <person name="Israni S."/>
            <person name="Dalin E."/>
            <person name="Tice H."/>
            <person name="Pitluck S."/>
            <person name="Chain P."/>
            <person name="Malfatti S."/>
            <person name="Shin M."/>
            <person name="Vergez L."/>
            <person name="Schmutz J."/>
            <person name="Larimer F."/>
            <person name="Land M."/>
            <person name="Hauser L."/>
            <person name="Kyrpides N."/>
            <person name="Mikhailova N."/>
            <person name="Romine M.F."/>
            <person name="Serres G."/>
            <person name="Fredrickson J."/>
            <person name="Tiedje J."/>
            <person name="Richardson P."/>
        </authorList>
    </citation>
    <scope>NUCLEOTIDE SEQUENCE [LARGE SCALE GENOMIC DNA]</scope>
    <source>
        <strain>ATCC BAA-1088 / PV-4</strain>
    </source>
</reference>
<proteinExistence type="inferred from homology"/>
<organism>
    <name type="scientific">Shewanella loihica (strain ATCC BAA-1088 / PV-4)</name>
    <dbReference type="NCBI Taxonomy" id="323850"/>
    <lineage>
        <taxon>Bacteria</taxon>
        <taxon>Pseudomonadati</taxon>
        <taxon>Pseudomonadota</taxon>
        <taxon>Gammaproteobacteria</taxon>
        <taxon>Alteromonadales</taxon>
        <taxon>Shewanellaceae</taxon>
        <taxon>Shewanella</taxon>
    </lineage>
</organism>
<accession>A3QJS0</accession>
<sequence length="207" mass="23345">MLAAQLDSYLADMQMTATPKQKQQLLDFVAMLAKWNKAYNLTSVRDPEQMLIRHIMDSLAASPHLVGERFIDVGTGPGLPGIPLAIMNPDKEFVLLDSLGKRIRFQKQVQFELAIGNISSVESRVEAYQPEEKFDGVLSRAFASIQDMLQWCHHLPKPTGCFYALKGQLSDEEMANMPEGFTLTDVFELKVPRLDEQRHLLRVVKAA</sequence>